<proteinExistence type="evidence at transcript level"/>
<feature type="chain" id="PRO_0000234332" description="Protein YIPF5">
    <location>
        <begin position="1"/>
        <end position="257"/>
    </location>
</feature>
<feature type="topological domain" description="Cytoplasmic" evidence="2">
    <location>
        <begin position="1"/>
        <end position="124"/>
    </location>
</feature>
<feature type="transmembrane region" description="Helical" evidence="3">
    <location>
        <begin position="125"/>
        <end position="145"/>
    </location>
</feature>
<feature type="topological domain" description="Lumenal" evidence="5">
    <location>
        <position position="146"/>
    </location>
</feature>
<feature type="transmembrane region" description="Helical" evidence="3">
    <location>
        <begin position="147"/>
        <end position="167"/>
    </location>
</feature>
<feature type="topological domain" description="Cytoplasmic" evidence="5">
    <location>
        <begin position="168"/>
        <end position="173"/>
    </location>
</feature>
<feature type="transmembrane region" description="Helical" evidence="3">
    <location>
        <begin position="174"/>
        <end position="194"/>
    </location>
</feature>
<feature type="topological domain" description="Lumenal" evidence="5">
    <location>
        <begin position="195"/>
        <end position="196"/>
    </location>
</feature>
<feature type="transmembrane region" description="Helical" evidence="3">
    <location>
        <begin position="197"/>
        <end position="217"/>
    </location>
</feature>
<feature type="topological domain" description="Cytoplasmic" evidence="5">
    <location>
        <begin position="218"/>
        <end position="236"/>
    </location>
</feature>
<feature type="transmembrane region" description="Helical" evidence="3">
    <location>
        <begin position="237"/>
        <end position="257"/>
    </location>
</feature>
<feature type="region of interest" description="Interaction with Sec23" evidence="1">
    <location>
        <begin position="75"/>
        <end position="106"/>
    </location>
</feature>
<evidence type="ECO:0000250" key="1"/>
<evidence type="ECO:0000250" key="2">
    <source>
        <dbReference type="UniProtKB" id="Q969M3"/>
    </source>
</evidence>
<evidence type="ECO:0000255" key="3"/>
<evidence type="ECO:0000269" key="4">
    <source>
    </source>
</evidence>
<evidence type="ECO:0000305" key="5"/>
<evidence type="ECO:0000312" key="6">
    <source>
        <dbReference type="RGD" id="1359165"/>
    </source>
</evidence>
<reference key="1">
    <citation type="journal article" date="2004" name="Genome Res.">
        <title>The status, quality, and expansion of the NIH full-length cDNA project: the Mammalian Gene Collection (MGC).</title>
        <authorList>
            <consortium name="The MGC Project Team"/>
        </authorList>
    </citation>
    <scope>NUCLEOTIDE SEQUENCE [LARGE SCALE MRNA]</scope>
    <source>
        <tissue>Heart</tissue>
    </source>
</reference>
<reference key="2">
    <citation type="journal article" date="2001" name="J. Biol. Chem.">
        <title>A membrane protein enriched in endoplasmic reticulum exit sites interacts with COPII.</title>
        <authorList>
            <person name="Tang B.L."/>
            <person name="Ong Y.S."/>
            <person name="Huang B."/>
            <person name="Wei S."/>
            <person name="Wong E.T."/>
            <person name="Qi R."/>
            <person name="Horstmann H."/>
            <person name="Hong W."/>
        </authorList>
    </citation>
    <scope>FUNCTION</scope>
    <scope>SUBCELLULAR LOCATION</scope>
</reference>
<dbReference type="EMBL" id="BC083754">
    <property type="protein sequence ID" value="AAH83754.1"/>
    <property type="molecule type" value="mRNA"/>
</dbReference>
<dbReference type="RefSeq" id="NP_001014172.3">
    <property type="nucleotide sequence ID" value="NM_001014150.3"/>
</dbReference>
<dbReference type="FunCoup" id="Q5XID0">
    <property type="interactions" value="3876"/>
</dbReference>
<dbReference type="STRING" id="10116.ENSRNOP00000041654"/>
<dbReference type="GlyGen" id="Q5XID0">
    <property type="glycosylation" value="1 site"/>
</dbReference>
<dbReference type="PhosphoSitePlus" id="Q5XID0"/>
<dbReference type="jPOST" id="Q5XID0"/>
<dbReference type="PaxDb" id="10116-ENSRNOP00000041654"/>
<dbReference type="Ensembl" id="ENSRNOT00000020385.6">
    <property type="protein sequence ID" value="ENSRNOP00000020385.2"/>
    <property type="gene ID" value="ENSRNOG00000014564.7"/>
</dbReference>
<dbReference type="GeneID" id="361315"/>
<dbReference type="KEGG" id="rno:361315"/>
<dbReference type="UCSC" id="RGD:1359165">
    <property type="organism name" value="rat"/>
</dbReference>
<dbReference type="AGR" id="RGD:1359165"/>
<dbReference type="CTD" id="81555"/>
<dbReference type="RGD" id="1359165">
    <property type="gene designation" value="Yipf5"/>
</dbReference>
<dbReference type="eggNOG" id="KOG3103">
    <property type="taxonomic scope" value="Eukaryota"/>
</dbReference>
<dbReference type="GeneTree" id="ENSGT00940000153168"/>
<dbReference type="HOGENOM" id="CLU_074741_2_0_1"/>
<dbReference type="InParanoid" id="Q5XID0"/>
<dbReference type="OMA" id="HIRAKSM"/>
<dbReference type="OrthoDB" id="53092at9989"/>
<dbReference type="PRO" id="PR:Q5XID0"/>
<dbReference type="Proteomes" id="UP000002494">
    <property type="component" value="Chromosome 18"/>
</dbReference>
<dbReference type="Bgee" id="ENSRNOG00000014564">
    <property type="expression patterns" value="Expressed in pancreas and 20 other cell types or tissues"/>
</dbReference>
<dbReference type="ExpressionAtlas" id="Q5XID0">
    <property type="expression patterns" value="baseline and differential"/>
</dbReference>
<dbReference type="GO" id="GO:0030134">
    <property type="term" value="C:COPII-coated ER to Golgi transport vesicle"/>
    <property type="evidence" value="ECO:0000266"/>
    <property type="project" value="RGD"/>
</dbReference>
<dbReference type="GO" id="GO:0070971">
    <property type="term" value="C:endoplasmic reticulum exit site"/>
    <property type="evidence" value="ECO:0000266"/>
    <property type="project" value="RGD"/>
</dbReference>
<dbReference type="GO" id="GO:0005789">
    <property type="term" value="C:endoplasmic reticulum membrane"/>
    <property type="evidence" value="ECO:0007669"/>
    <property type="project" value="UniProtKB-SubCell"/>
</dbReference>
<dbReference type="GO" id="GO:0042175">
    <property type="term" value="C:nuclear outer membrane-endoplasmic reticulum membrane network"/>
    <property type="evidence" value="ECO:0000266"/>
    <property type="project" value="RGD"/>
</dbReference>
<dbReference type="GO" id="GO:0005802">
    <property type="term" value="C:trans-Golgi network"/>
    <property type="evidence" value="ECO:0000318"/>
    <property type="project" value="GO_Central"/>
</dbReference>
<dbReference type="GO" id="GO:0006888">
    <property type="term" value="P:endoplasmic reticulum to Golgi vesicle-mediated transport"/>
    <property type="evidence" value="ECO:0000318"/>
    <property type="project" value="GO_Central"/>
</dbReference>
<dbReference type="GO" id="GO:0007030">
    <property type="term" value="P:Golgi organization"/>
    <property type="evidence" value="ECO:0000266"/>
    <property type="project" value="RGD"/>
</dbReference>
<dbReference type="GO" id="GO:0030070">
    <property type="term" value="P:insulin processing"/>
    <property type="evidence" value="ECO:0000250"/>
    <property type="project" value="UniProtKB"/>
</dbReference>
<dbReference type="GO" id="GO:0015031">
    <property type="term" value="P:protein transport"/>
    <property type="evidence" value="ECO:0007669"/>
    <property type="project" value="UniProtKB-KW"/>
</dbReference>
<dbReference type="GO" id="GO:0060628">
    <property type="term" value="P:regulation of ER to Golgi vesicle-mediated transport"/>
    <property type="evidence" value="ECO:0000250"/>
    <property type="project" value="UniProtKB"/>
</dbReference>
<dbReference type="GO" id="GO:0048280">
    <property type="term" value="P:vesicle fusion with Golgi apparatus"/>
    <property type="evidence" value="ECO:0000318"/>
    <property type="project" value="GO_Central"/>
</dbReference>
<dbReference type="InterPro" id="IPR045231">
    <property type="entry name" value="Yip1/4-like"/>
</dbReference>
<dbReference type="InterPro" id="IPR006977">
    <property type="entry name" value="Yip1_dom"/>
</dbReference>
<dbReference type="PANTHER" id="PTHR21236">
    <property type="entry name" value="GOLGI MEMBRANE PROTEIN YIP1"/>
    <property type="match status" value="1"/>
</dbReference>
<dbReference type="PANTHER" id="PTHR21236:SF6">
    <property type="entry name" value="PROTEIN YIPF5"/>
    <property type="match status" value="1"/>
</dbReference>
<dbReference type="Pfam" id="PF04893">
    <property type="entry name" value="Yip1"/>
    <property type="match status" value="1"/>
</dbReference>
<gene>
    <name evidence="6" type="primary">Yipf5</name>
    <name type="synonym">Yip1a</name>
</gene>
<accession>Q5XID0</accession>
<name>YIPF5_RAT</name>
<organism>
    <name type="scientific">Rattus norvegicus</name>
    <name type="common">Rat</name>
    <dbReference type="NCBI Taxonomy" id="10116"/>
    <lineage>
        <taxon>Eukaryota</taxon>
        <taxon>Metazoa</taxon>
        <taxon>Chordata</taxon>
        <taxon>Craniata</taxon>
        <taxon>Vertebrata</taxon>
        <taxon>Euteleostomi</taxon>
        <taxon>Mammalia</taxon>
        <taxon>Eutheria</taxon>
        <taxon>Euarchontoglires</taxon>
        <taxon>Glires</taxon>
        <taxon>Rodentia</taxon>
        <taxon>Myomorpha</taxon>
        <taxon>Muroidea</taxon>
        <taxon>Muridae</taxon>
        <taxon>Murinae</taxon>
        <taxon>Rattus</taxon>
    </lineage>
</organism>
<sequence length="257" mass="27903">MSGFDNLNSGFYQTSYSIDEQSQQSYDYGGSGGPYSKQYAGCEYSQQGRFVPPDMMQPQQTYTGQIYQPTQAYPPPTPQTFYGDSFEEEPPLLEELGINFDHIWQKTLTVLHPLRASDGSIMNETDLAGPVVFCLAFGATLLLAGKIQFGYVYGISAIGCLGMFCLLNLMSMTGVSFGCVASVLGYCLLPMILLSSFAVVFSLQGMVGILLTATIIGWCSFSASKIFISALAMDGQQLLVAYPCALLYGVFALISVF</sequence>
<keyword id="KW-0968">Cytoplasmic vesicle</keyword>
<keyword id="KW-0256">Endoplasmic reticulum</keyword>
<keyword id="KW-0931">ER-Golgi transport</keyword>
<keyword id="KW-0333">Golgi apparatus</keyword>
<keyword id="KW-0472">Membrane</keyword>
<keyword id="KW-0653">Protein transport</keyword>
<keyword id="KW-1185">Reference proteome</keyword>
<keyword id="KW-0812">Transmembrane</keyword>
<keyword id="KW-1133">Transmembrane helix</keyword>
<keyword id="KW-0813">Transport</keyword>
<comment type="function">
    <text evidence="2 4">Plays a role in transport between endoplasmic reticulum and Golgi. In pancreatic beta cells, required to transport proinsulin from endoplasmic reticulum into the Golgi (By similarity).</text>
</comment>
<comment type="subunit">
    <text evidence="2">Interacts with the COPII coat components Sec23 (SEC23A and/or SEC23B) and Sec24 (SEC24A and/or SEC24B) (By similarity). Interacts with YIF1A (By similarity). May interact with RAB1A (By similarity). Interacts with YIPF3 and YIPF4 (By similarity).</text>
</comment>
<comment type="subcellular location">
    <subcellularLocation>
        <location evidence="4">Endoplasmic reticulum membrane</location>
        <topology evidence="4">Multi-pass membrane protein</topology>
    </subcellularLocation>
    <subcellularLocation>
        <location evidence="4">Golgi apparatus</location>
        <location evidence="4">cis-Golgi network membrane</location>
        <topology evidence="4">Multi-pass membrane protein</topology>
    </subcellularLocation>
    <subcellularLocation>
        <location evidence="4">Cytoplasmic vesicle</location>
        <location evidence="4">COPII-coated vesicle</location>
    </subcellularLocation>
    <text evidence="4">Enriched at the endoplasmic reticulum exit sites. Incorporated into COPII coated vesicles.</text>
</comment>
<comment type="similarity">
    <text evidence="5">Belongs to the YIP1 family.</text>
</comment>
<protein>
    <recommendedName>
        <fullName>Protein YIPF5</fullName>
    </recommendedName>
    <alternativeName>
        <fullName>YIP1 family member 5</fullName>
    </alternativeName>
    <alternativeName>
        <fullName>YPT-interacting protein 1 A</fullName>
    </alternativeName>
</protein>